<proteinExistence type="inferred from homology"/>
<evidence type="ECO:0000255" key="1">
    <source>
        <dbReference type="HAMAP-Rule" id="MF_00109"/>
    </source>
</evidence>
<dbReference type="EC" id="2.7.1.71" evidence="1"/>
<dbReference type="EMBL" id="CP000721">
    <property type="protein sequence ID" value="ABR36680.1"/>
    <property type="molecule type" value="Genomic_DNA"/>
</dbReference>
<dbReference type="RefSeq" id="WP_012060727.1">
    <property type="nucleotide sequence ID" value="NC_009617.1"/>
</dbReference>
<dbReference type="SMR" id="A6M250"/>
<dbReference type="GeneID" id="66347434"/>
<dbReference type="KEGG" id="cbe:Cbei_4571"/>
<dbReference type="eggNOG" id="COG0703">
    <property type="taxonomic scope" value="Bacteria"/>
</dbReference>
<dbReference type="HOGENOM" id="CLU_057607_4_0_9"/>
<dbReference type="UniPathway" id="UPA00053">
    <property type="reaction ID" value="UER00088"/>
</dbReference>
<dbReference type="Proteomes" id="UP000000565">
    <property type="component" value="Chromosome"/>
</dbReference>
<dbReference type="GO" id="GO:0005829">
    <property type="term" value="C:cytosol"/>
    <property type="evidence" value="ECO:0007669"/>
    <property type="project" value="TreeGrafter"/>
</dbReference>
<dbReference type="GO" id="GO:0005524">
    <property type="term" value="F:ATP binding"/>
    <property type="evidence" value="ECO:0007669"/>
    <property type="project" value="UniProtKB-UniRule"/>
</dbReference>
<dbReference type="GO" id="GO:0000287">
    <property type="term" value="F:magnesium ion binding"/>
    <property type="evidence" value="ECO:0007669"/>
    <property type="project" value="UniProtKB-UniRule"/>
</dbReference>
<dbReference type="GO" id="GO:0004765">
    <property type="term" value="F:shikimate kinase activity"/>
    <property type="evidence" value="ECO:0007669"/>
    <property type="project" value="UniProtKB-UniRule"/>
</dbReference>
<dbReference type="GO" id="GO:0008652">
    <property type="term" value="P:amino acid biosynthetic process"/>
    <property type="evidence" value="ECO:0007669"/>
    <property type="project" value="UniProtKB-KW"/>
</dbReference>
<dbReference type="GO" id="GO:0009073">
    <property type="term" value="P:aromatic amino acid family biosynthetic process"/>
    <property type="evidence" value="ECO:0007669"/>
    <property type="project" value="UniProtKB-KW"/>
</dbReference>
<dbReference type="GO" id="GO:0009423">
    <property type="term" value="P:chorismate biosynthetic process"/>
    <property type="evidence" value="ECO:0007669"/>
    <property type="project" value="UniProtKB-UniRule"/>
</dbReference>
<dbReference type="CDD" id="cd00464">
    <property type="entry name" value="SK"/>
    <property type="match status" value="1"/>
</dbReference>
<dbReference type="Gene3D" id="3.40.50.300">
    <property type="entry name" value="P-loop containing nucleotide triphosphate hydrolases"/>
    <property type="match status" value="1"/>
</dbReference>
<dbReference type="HAMAP" id="MF_00109">
    <property type="entry name" value="Shikimate_kinase"/>
    <property type="match status" value="1"/>
</dbReference>
<dbReference type="InterPro" id="IPR027417">
    <property type="entry name" value="P-loop_NTPase"/>
</dbReference>
<dbReference type="InterPro" id="IPR031322">
    <property type="entry name" value="Shikimate/glucono_kinase"/>
</dbReference>
<dbReference type="InterPro" id="IPR000623">
    <property type="entry name" value="Shikimate_kinase/TSH1"/>
</dbReference>
<dbReference type="PANTHER" id="PTHR21087">
    <property type="entry name" value="SHIKIMATE KINASE"/>
    <property type="match status" value="1"/>
</dbReference>
<dbReference type="PANTHER" id="PTHR21087:SF16">
    <property type="entry name" value="SHIKIMATE KINASE 1, CHLOROPLASTIC"/>
    <property type="match status" value="1"/>
</dbReference>
<dbReference type="Pfam" id="PF01202">
    <property type="entry name" value="SKI"/>
    <property type="match status" value="1"/>
</dbReference>
<dbReference type="PRINTS" id="PR01100">
    <property type="entry name" value="SHIKIMTKNASE"/>
</dbReference>
<dbReference type="SUPFAM" id="SSF52540">
    <property type="entry name" value="P-loop containing nucleoside triphosphate hydrolases"/>
    <property type="match status" value="1"/>
</dbReference>
<organism>
    <name type="scientific">Clostridium beijerinckii (strain ATCC 51743 / NCIMB 8052)</name>
    <name type="common">Clostridium acetobutylicum</name>
    <dbReference type="NCBI Taxonomy" id="290402"/>
    <lineage>
        <taxon>Bacteria</taxon>
        <taxon>Bacillati</taxon>
        <taxon>Bacillota</taxon>
        <taxon>Clostridia</taxon>
        <taxon>Eubacteriales</taxon>
        <taxon>Clostridiaceae</taxon>
        <taxon>Clostridium</taxon>
    </lineage>
</organism>
<sequence>MKNKVVFIGMPGCGKSTIGRLVSEELKINFIDMDNYIENMTSKTIPELFEHGENYFRDFESLACRELAKEGKAIISSGGGVVKRKENIDILKEESFIIFIDRPLEELLGDVDISKRPLLKEGREKIIKLYEERYELYRLCADKIIRNDREIGNIVNEIKEVILDNLEMN</sequence>
<reference key="1">
    <citation type="submission" date="2007-06" db="EMBL/GenBank/DDBJ databases">
        <title>Complete sequence of Clostridium beijerinckii NCIMB 8052.</title>
        <authorList>
            <consortium name="US DOE Joint Genome Institute"/>
            <person name="Copeland A."/>
            <person name="Lucas S."/>
            <person name="Lapidus A."/>
            <person name="Barry K."/>
            <person name="Detter J.C."/>
            <person name="Glavina del Rio T."/>
            <person name="Hammon N."/>
            <person name="Israni S."/>
            <person name="Dalin E."/>
            <person name="Tice H."/>
            <person name="Pitluck S."/>
            <person name="Sims D."/>
            <person name="Brettin T."/>
            <person name="Bruce D."/>
            <person name="Tapia R."/>
            <person name="Brainard J."/>
            <person name="Schmutz J."/>
            <person name="Larimer F."/>
            <person name="Land M."/>
            <person name="Hauser L."/>
            <person name="Kyrpides N."/>
            <person name="Mikhailova N."/>
            <person name="Bennet G."/>
            <person name="Cann I."/>
            <person name="Chen J.-S."/>
            <person name="Contreras A.L."/>
            <person name="Jones D."/>
            <person name="Kashket E."/>
            <person name="Mitchell W."/>
            <person name="Stoddard S."/>
            <person name="Schwarz W."/>
            <person name="Qureshi N."/>
            <person name="Young M."/>
            <person name="Shi Z."/>
            <person name="Ezeji T."/>
            <person name="White B."/>
            <person name="Blaschek H."/>
            <person name="Richardson P."/>
        </authorList>
    </citation>
    <scope>NUCLEOTIDE SEQUENCE [LARGE SCALE GENOMIC DNA]</scope>
    <source>
        <strain>ATCC 51743 / NCIMB 8052</strain>
    </source>
</reference>
<name>AROK_CLOB8</name>
<protein>
    <recommendedName>
        <fullName evidence="1">Shikimate kinase</fullName>
        <shortName evidence="1">SK</shortName>
        <ecNumber evidence="1">2.7.1.71</ecNumber>
    </recommendedName>
</protein>
<keyword id="KW-0028">Amino-acid biosynthesis</keyword>
<keyword id="KW-0057">Aromatic amino acid biosynthesis</keyword>
<keyword id="KW-0067">ATP-binding</keyword>
<keyword id="KW-0963">Cytoplasm</keyword>
<keyword id="KW-0418">Kinase</keyword>
<keyword id="KW-0460">Magnesium</keyword>
<keyword id="KW-0479">Metal-binding</keyword>
<keyword id="KW-0547">Nucleotide-binding</keyword>
<keyword id="KW-0808">Transferase</keyword>
<comment type="function">
    <text evidence="1">Catalyzes the specific phosphorylation of the 3-hydroxyl group of shikimic acid using ATP as a cosubstrate.</text>
</comment>
<comment type="catalytic activity">
    <reaction evidence="1">
        <text>shikimate + ATP = 3-phosphoshikimate + ADP + H(+)</text>
        <dbReference type="Rhea" id="RHEA:13121"/>
        <dbReference type="ChEBI" id="CHEBI:15378"/>
        <dbReference type="ChEBI" id="CHEBI:30616"/>
        <dbReference type="ChEBI" id="CHEBI:36208"/>
        <dbReference type="ChEBI" id="CHEBI:145989"/>
        <dbReference type="ChEBI" id="CHEBI:456216"/>
        <dbReference type="EC" id="2.7.1.71"/>
    </reaction>
</comment>
<comment type="cofactor">
    <cofactor evidence="1">
        <name>Mg(2+)</name>
        <dbReference type="ChEBI" id="CHEBI:18420"/>
    </cofactor>
    <text evidence="1">Binds 1 Mg(2+) ion per subunit.</text>
</comment>
<comment type="pathway">
    <text evidence="1">Metabolic intermediate biosynthesis; chorismate biosynthesis; chorismate from D-erythrose 4-phosphate and phosphoenolpyruvate: step 5/7.</text>
</comment>
<comment type="subunit">
    <text evidence="1">Monomer.</text>
</comment>
<comment type="subcellular location">
    <subcellularLocation>
        <location evidence="1">Cytoplasm</location>
    </subcellularLocation>
</comment>
<comment type="similarity">
    <text evidence="1">Belongs to the shikimate kinase family.</text>
</comment>
<feature type="chain" id="PRO_1000117455" description="Shikimate kinase">
    <location>
        <begin position="1"/>
        <end position="169"/>
    </location>
</feature>
<feature type="binding site" evidence="1">
    <location>
        <begin position="12"/>
        <end position="17"/>
    </location>
    <ligand>
        <name>ATP</name>
        <dbReference type="ChEBI" id="CHEBI:30616"/>
    </ligand>
</feature>
<feature type="binding site" evidence="1">
    <location>
        <position position="16"/>
    </location>
    <ligand>
        <name>Mg(2+)</name>
        <dbReference type="ChEBI" id="CHEBI:18420"/>
    </ligand>
</feature>
<feature type="binding site" evidence="1">
    <location>
        <position position="34"/>
    </location>
    <ligand>
        <name>substrate</name>
    </ligand>
</feature>
<feature type="binding site" evidence="1">
    <location>
        <position position="57"/>
    </location>
    <ligand>
        <name>substrate</name>
    </ligand>
</feature>
<feature type="binding site" evidence="1">
    <location>
        <position position="79"/>
    </location>
    <ligand>
        <name>substrate</name>
    </ligand>
</feature>
<feature type="binding site" evidence="1">
    <location>
        <position position="116"/>
    </location>
    <ligand>
        <name>ATP</name>
        <dbReference type="ChEBI" id="CHEBI:30616"/>
    </ligand>
</feature>
<feature type="binding site" evidence="1">
    <location>
        <position position="133"/>
    </location>
    <ligand>
        <name>substrate</name>
    </ligand>
</feature>
<gene>
    <name evidence="1" type="primary">aroK</name>
    <name type="ordered locus">Cbei_4571</name>
</gene>
<accession>A6M250</accession>